<proteinExistence type="inferred from homology"/>
<name>PSBC_ANGEV</name>
<evidence type="ECO:0000255" key="1">
    <source>
        <dbReference type="HAMAP-Rule" id="MF_01496"/>
    </source>
</evidence>
<feature type="propeptide" id="PRO_0000431110" evidence="1">
    <location>
        <begin position="1"/>
        <end position="14"/>
    </location>
</feature>
<feature type="chain" id="PRO_0000361318" description="Photosystem II CP43 reaction center protein" evidence="1">
    <location>
        <begin position="15"/>
        <end position="473"/>
    </location>
</feature>
<feature type="transmembrane region" description="Helical" evidence="1">
    <location>
        <begin position="69"/>
        <end position="93"/>
    </location>
</feature>
<feature type="transmembrane region" description="Helical" evidence="1">
    <location>
        <begin position="134"/>
        <end position="155"/>
    </location>
</feature>
<feature type="transmembrane region" description="Helical" evidence="1">
    <location>
        <begin position="178"/>
        <end position="200"/>
    </location>
</feature>
<feature type="transmembrane region" description="Helical" evidence="1">
    <location>
        <begin position="255"/>
        <end position="275"/>
    </location>
</feature>
<feature type="transmembrane region" description="Helical" evidence="1">
    <location>
        <begin position="291"/>
        <end position="312"/>
    </location>
</feature>
<feature type="transmembrane region" description="Helical" evidence="1">
    <location>
        <begin position="447"/>
        <end position="471"/>
    </location>
</feature>
<feature type="binding site" evidence="1">
    <location>
        <position position="367"/>
    </location>
    <ligand>
        <name>[CaMn4O5] cluster</name>
        <dbReference type="ChEBI" id="CHEBI:189552"/>
    </ligand>
</feature>
<feature type="modified residue" description="N-acetylthreonine" evidence="1">
    <location>
        <position position="15"/>
    </location>
</feature>
<feature type="modified residue" description="Phosphothreonine" evidence="1">
    <location>
        <position position="15"/>
    </location>
</feature>
<keyword id="KW-0007">Acetylation</keyword>
<keyword id="KW-0148">Chlorophyll</keyword>
<keyword id="KW-0150">Chloroplast</keyword>
<keyword id="KW-0157">Chromophore</keyword>
<keyword id="KW-0464">Manganese</keyword>
<keyword id="KW-0472">Membrane</keyword>
<keyword id="KW-0479">Metal-binding</keyword>
<keyword id="KW-0597">Phosphoprotein</keyword>
<keyword id="KW-0602">Photosynthesis</keyword>
<keyword id="KW-0604">Photosystem II</keyword>
<keyword id="KW-0934">Plastid</keyword>
<keyword id="KW-0793">Thylakoid</keyword>
<keyword id="KW-0812">Transmembrane</keyword>
<keyword id="KW-1133">Transmembrane helix</keyword>
<accession>A2T329</accession>
<organism>
    <name type="scientific">Angiopteris evecta</name>
    <name type="common">Mule's foot fern</name>
    <name type="synonym">Polypodium evectum</name>
    <dbReference type="NCBI Taxonomy" id="13825"/>
    <lineage>
        <taxon>Eukaryota</taxon>
        <taxon>Viridiplantae</taxon>
        <taxon>Streptophyta</taxon>
        <taxon>Embryophyta</taxon>
        <taxon>Tracheophyta</taxon>
        <taxon>Polypodiopsida</taxon>
        <taxon>Marattiidae</taxon>
        <taxon>Marattiales</taxon>
        <taxon>Marattiaceae</taxon>
        <taxon>Angiopteris</taxon>
    </lineage>
</organism>
<geneLocation type="chloroplast"/>
<reference key="1">
    <citation type="journal article" date="2007" name="Am. Fern J.">
        <title>The complete plastid genome sequence of Angiopteris evecta (G. Forst.) Hoffm. (Marattiaceae).</title>
        <authorList>
            <person name="Roper J.M."/>
            <person name="Hansen S.K."/>
            <person name="Wolf P.G."/>
            <person name="Karol K.G."/>
            <person name="Mandoli D.F."/>
            <person name="Everett K.D.E."/>
            <person name="Kuehl J."/>
            <person name="Boore J.L."/>
        </authorList>
    </citation>
    <scope>NUCLEOTIDE SEQUENCE [LARGE SCALE GENOMIC DNA]</scope>
</reference>
<protein>
    <recommendedName>
        <fullName evidence="1">Photosystem II CP43 reaction center protein</fullName>
    </recommendedName>
    <alternativeName>
        <fullName evidence="1">PSII 43 kDa protein</fullName>
    </alternativeName>
    <alternativeName>
        <fullName evidence="1">Protein CP-43</fullName>
    </alternativeName>
</protein>
<sequence>MKTLYSLRRFYPVETLFNGTLSLGGRDQETTGFAWWAGNARLINLSGKLLGAHVAHAGLIVFWAGAMNLFEVAHFVPEKPMYEQGLILLPHLATLGWGVGPGGEVIDTFPYFVSGVLHLISSAVLGFGGIYHALIGPETLEESFPFFGYVWKDKNKMTTILGIHLILLGAGAFLLVFKALYFGGVYDTWAPGGGDVRKITNLTLSPSVIFGYLLRSPFGGEGWIVGVDNLEDIIGGHVWLGSICIFGGIWHILTKPFAWARRAFIWSGEAYLSYSQGALSIFGFTACCFVWFNNTAYPSEFYGPTGPEASQAQAFTFLVRDQRLGANIGSAQGPTGLGKYLMRSPTGEIIFGGETMRFWDLRAPWLEPLRGPNGLDLSKLKKDIQPWQERRSAEYMTHAPLGSLNSVGGVATEINAVNYVSPRSWLSTSHFVLGFFFFVGHLWHAGRARAAAAGFEKGIDRDTEPVLSMTPLN</sequence>
<dbReference type="EMBL" id="DQ821119">
    <property type="protein sequence ID" value="ABG79596.1"/>
    <property type="molecule type" value="Genomic_DNA"/>
</dbReference>
<dbReference type="RefSeq" id="YP_001023697.1">
    <property type="nucleotide sequence ID" value="NC_008829.1"/>
</dbReference>
<dbReference type="SMR" id="A2T329"/>
<dbReference type="GeneID" id="4788170"/>
<dbReference type="GO" id="GO:0009535">
    <property type="term" value="C:chloroplast thylakoid membrane"/>
    <property type="evidence" value="ECO:0007669"/>
    <property type="project" value="UniProtKB-SubCell"/>
</dbReference>
<dbReference type="GO" id="GO:0009523">
    <property type="term" value="C:photosystem II"/>
    <property type="evidence" value="ECO:0007669"/>
    <property type="project" value="UniProtKB-KW"/>
</dbReference>
<dbReference type="GO" id="GO:0016168">
    <property type="term" value="F:chlorophyll binding"/>
    <property type="evidence" value="ECO:0007669"/>
    <property type="project" value="UniProtKB-UniRule"/>
</dbReference>
<dbReference type="GO" id="GO:0045156">
    <property type="term" value="F:electron transporter, transferring electrons within the cyclic electron transport pathway of photosynthesis activity"/>
    <property type="evidence" value="ECO:0007669"/>
    <property type="project" value="InterPro"/>
</dbReference>
<dbReference type="GO" id="GO:0046872">
    <property type="term" value="F:metal ion binding"/>
    <property type="evidence" value="ECO:0007669"/>
    <property type="project" value="UniProtKB-KW"/>
</dbReference>
<dbReference type="GO" id="GO:0009772">
    <property type="term" value="P:photosynthetic electron transport in photosystem II"/>
    <property type="evidence" value="ECO:0007669"/>
    <property type="project" value="InterPro"/>
</dbReference>
<dbReference type="FunFam" id="1.10.10.670:FF:000001">
    <property type="entry name" value="Photosystem II CP43 reaction center protein"/>
    <property type="match status" value="1"/>
</dbReference>
<dbReference type="Gene3D" id="1.10.10.670">
    <property type="entry name" value="photosystem ii from thermosynechococcus elongatus"/>
    <property type="match status" value="1"/>
</dbReference>
<dbReference type="HAMAP" id="MF_01496">
    <property type="entry name" value="PSII_PsbC_CP43"/>
    <property type="match status" value="1"/>
</dbReference>
<dbReference type="InterPro" id="IPR000932">
    <property type="entry name" value="PS_antenna-like"/>
</dbReference>
<dbReference type="InterPro" id="IPR036001">
    <property type="entry name" value="PS_II_antenna-like_sf"/>
</dbReference>
<dbReference type="InterPro" id="IPR005869">
    <property type="entry name" value="PSII_PsbC"/>
</dbReference>
<dbReference type="InterPro" id="IPR044900">
    <property type="entry name" value="PSII_PsbC_sf"/>
</dbReference>
<dbReference type="NCBIfam" id="TIGR01153">
    <property type="entry name" value="psbC"/>
    <property type="match status" value="1"/>
</dbReference>
<dbReference type="Pfam" id="PF00421">
    <property type="entry name" value="PSII"/>
    <property type="match status" value="1"/>
</dbReference>
<dbReference type="SUPFAM" id="SSF161077">
    <property type="entry name" value="Photosystem II antenna protein-like"/>
    <property type="match status" value="1"/>
</dbReference>
<gene>
    <name evidence="1" type="primary">psbC</name>
</gene>
<comment type="function">
    <text evidence="1">One of the components of the core complex of photosystem II (PSII). It binds chlorophyll and helps catalyze the primary light-induced photochemical processes of PSII. PSII is a light-driven water:plastoquinone oxidoreductase, using light energy to abstract electrons from H(2)O, generating O(2) and a proton gradient subsequently used for ATP formation.</text>
</comment>
<comment type="cofactor">
    <text evidence="1">Binds multiple chlorophylls and provides some of the ligands for the Ca-4Mn-5O cluster of the oxygen-evolving complex. It may also provide a ligand for a Cl- that is required for oxygen evolution. PSII binds additional chlorophylls, carotenoids and specific lipids.</text>
</comment>
<comment type="subunit">
    <text evidence="1">PSII is composed of 1 copy each of membrane proteins PsbA, PsbB, PsbC, PsbD, PsbE, PsbF, PsbH, PsbI, PsbJ, PsbK, PsbL, PsbM, PsbT, PsbX, PsbY, PsbZ, Psb30/Ycf12, at least 3 peripheral proteins of the oxygen-evolving complex and a large number of cofactors. It forms dimeric complexes.</text>
</comment>
<comment type="subcellular location">
    <subcellularLocation>
        <location evidence="1">Plastid</location>
        <location evidence="1">Chloroplast thylakoid membrane</location>
        <topology evidence="1">Multi-pass membrane protein</topology>
    </subcellularLocation>
</comment>
<comment type="similarity">
    <text evidence="1">Belongs to the PsbB/PsbC family. PsbC subfamily.</text>
</comment>